<comment type="function">
    <text evidence="1">Aspartyl-tRNA synthetase with relaxed tRNA specificity since it is able to aspartylate not only its cognate tRNA(Asp) but also tRNA(Asn). Reaction proceeds in two steps: L-aspartate is first activated by ATP to form Asp-AMP and then transferred to the acceptor end of tRNA(Asp/Asn).</text>
</comment>
<comment type="catalytic activity">
    <reaction evidence="1">
        <text>tRNA(Asx) + L-aspartate + ATP = L-aspartyl-tRNA(Asx) + AMP + diphosphate</text>
        <dbReference type="Rhea" id="RHEA:18349"/>
        <dbReference type="Rhea" id="RHEA-COMP:9710"/>
        <dbReference type="Rhea" id="RHEA-COMP:9711"/>
        <dbReference type="ChEBI" id="CHEBI:29991"/>
        <dbReference type="ChEBI" id="CHEBI:30616"/>
        <dbReference type="ChEBI" id="CHEBI:33019"/>
        <dbReference type="ChEBI" id="CHEBI:78442"/>
        <dbReference type="ChEBI" id="CHEBI:78516"/>
        <dbReference type="ChEBI" id="CHEBI:456215"/>
        <dbReference type="EC" id="6.1.1.23"/>
    </reaction>
</comment>
<comment type="subunit">
    <text evidence="1">Homodimer.</text>
</comment>
<comment type="subcellular location">
    <subcellularLocation>
        <location evidence="1">Cytoplasm</location>
    </subcellularLocation>
</comment>
<comment type="similarity">
    <text evidence="1">Belongs to the class-II aminoacyl-tRNA synthetase family. Type 1 subfamily.</text>
</comment>
<reference key="1">
    <citation type="journal article" date="2008" name="Antimicrob. Agents Chemother.">
        <title>Whole-genome pyrosequencing of an epidemic multidrug-resistant Acinetobacter baumannii strain belonging to the European clone II group.</title>
        <authorList>
            <person name="Iacono M."/>
            <person name="Villa L."/>
            <person name="Fortini D."/>
            <person name="Bordoni R."/>
            <person name="Imperi F."/>
            <person name="Bonnal R.J."/>
            <person name="Sicheritz-Ponten T."/>
            <person name="De Bellis G."/>
            <person name="Visca P."/>
            <person name="Cassone A."/>
            <person name="Carattoli A."/>
        </authorList>
    </citation>
    <scope>NUCLEOTIDE SEQUENCE [LARGE SCALE GENOMIC DNA]</scope>
    <source>
        <strain>ACICU</strain>
    </source>
</reference>
<gene>
    <name evidence="1" type="primary">aspS</name>
    <name type="ordered locus">ACICU_03144</name>
</gene>
<protein>
    <recommendedName>
        <fullName evidence="1">Aspartate--tRNA(Asp/Asn) ligase</fullName>
        <ecNumber evidence="1">6.1.1.23</ecNumber>
    </recommendedName>
    <alternativeName>
        <fullName evidence="1">Aspartyl-tRNA synthetase</fullName>
        <shortName evidence="1">AspRS</shortName>
    </alternativeName>
    <alternativeName>
        <fullName evidence="1">Non-discriminating aspartyl-tRNA synthetase</fullName>
        <shortName evidence="1">ND-AspRS</shortName>
    </alternativeName>
</protein>
<sequence length="592" mass="66667">MMRTHYCGSLTEAQIDQTVTLCGWVHRRRDHGGVIFLDMRDRDGLVQVVIDPDTPEAFATADKARSEYVLKITGRVRRRYEGTENPNMVSGQIEVLGKEIEVLAASETPPFPLNDDTINVSEEHRLKYRFLDIRRPEMLERLRFRSKVTNLIRNYLDDHGFLDVETPILTRATPEGARDYLVPSRVQNGSFYALPQSPQLFKQLLMVGGIDRYYQIAKCFRDEDLRADRQPEFTQIDIETSFLNDDDIMDLMEGMTVKLFNDLLGVKFEKFRRMPYSEAMRDYASDKPDLRIPLKLVDVADLMQEVEFKVFAGPAKDPKGRIAALRVPGAGSLTRSQIDEYTKFVGIYGAKGLAYIKVNEIEKGIEGLQSPIVKFIEPIVMQLLERVGAENGDIVFFGADKAKIVNDAMGALRVKIGHDLNLATCEWAPLWVVDFPMFEETDDGKWTSVHHPFTLPKSSVEDVKSNPGEALSVAYDMVLNGTEVGGGSLRIYTLEMQKAIFEALGISDEEAEEKFSFLLNALRYGAPPHGGLAFGLDRLVMLMTGATSIRDVIAFPKTKTAECPLTQAPAPVEANQLRDLGIRLREQQKKEA</sequence>
<dbReference type="EC" id="6.1.1.23" evidence="1"/>
<dbReference type="EMBL" id="CP000863">
    <property type="protein sequence ID" value="ACC58456.1"/>
    <property type="molecule type" value="Genomic_DNA"/>
</dbReference>
<dbReference type="RefSeq" id="WP_000986451.1">
    <property type="nucleotide sequence ID" value="NZ_CP031380.1"/>
</dbReference>
<dbReference type="SMR" id="B2HYL7"/>
<dbReference type="GeneID" id="92895173"/>
<dbReference type="KEGG" id="abc:ACICU_03144"/>
<dbReference type="HOGENOM" id="CLU_014330_3_2_6"/>
<dbReference type="Proteomes" id="UP000008839">
    <property type="component" value="Chromosome"/>
</dbReference>
<dbReference type="GO" id="GO:0005737">
    <property type="term" value="C:cytoplasm"/>
    <property type="evidence" value="ECO:0007669"/>
    <property type="project" value="UniProtKB-SubCell"/>
</dbReference>
<dbReference type="GO" id="GO:0004815">
    <property type="term" value="F:aspartate-tRNA ligase activity"/>
    <property type="evidence" value="ECO:0007669"/>
    <property type="project" value="UniProtKB-UniRule"/>
</dbReference>
<dbReference type="GO" id="GO:0050560">
    <property type="term" value="F:aspartate-tRNA(Asn) ligase activity"/>
    <property type="evidence" value="ECO:0007669"/>
    <property type="project" value="UniProtKB-EC"/>
</dbReference>
<dbReference type="GO" id="GO:0005524">
    <property type="term" value="F:ATP binding"/>
    <property type="evidence" value="ECO:0007669"/>
    <property type="project" value="UniProtKB-UniRule"/>
</dbReference>
<dbReference type="GO" id="GO:0003676">
    <property type="term" value="F:nucleic acid binding"/>
    <property type="evidence" value="ECO:0007669"/>
    <property type="project" value="InterPro"/>
</dbReference>
<dbReference type="GO" id="GO:0006422">
    <property type="term" value="P:aspartyl-tRNA aminoacylation"/>
    <property type="evidence" value="ECO:0007669"/>
    <property type="project" value="UniProtKB-UniRule"/>
</dbReference>
<dbReference type="CDD" id="cd00777">
    <property type="entry name" value="AspRS_core"/>
    <property type="match status" value="1"/>
</dbReference>
<dbReference type="CDD" id="cd04317">
    <property type="entry name" value="EcAspRS_like_N"/>
    <property type="match status" value="1"/>
</dbReference>
<dbReference type="Gene3D" id="3.30.930.10">
    <property type="entry name" value="Bira Bifunctional Protein, Domain 2"/>
    <property type="match status" value="1"/>
</dbReference>
<dbReference type="Gene3D" id="3.30.1360.30">
    <property type="entry name" value="GAD-like domain"/>
    <property type="match status" value="1"/>
</dbReference>
<dbReference type="Gene3D" id="2.40.50.140">
    <property type="entry name" value="Nucleic acid-binding proteins"/>
    <property type="match status" value="1"/>
</dbReference>
<dbReference type="HAMAP" id="MF_00044">
    <property type="entry name" value="Asp_tRNA_synth_type1"/>
    <property type="match status" value="1"/>
</dbReference>
<dbReference type="InterPro" id="IPR004364">
    <property type="entry name" value="Aa-tRNA-synt_II"/>
</dbReference>
<dbReference type="InterPro" id="IPR006195">
    <property type="entry name" value="aa-tRNA-synth_II"/>
</dbReference>
<dbReference type="InterPro" id="IPR045864">
    <property type="entry name" value="aa-tRNA-synth_II/BPL/LPL"/>
</dbReference>
<dbReference type="InterPro" id="IPR004524">
    <property type="entry name" value="Asp-tRNA-ligase_1"/>
</dbReference>
<dbReference type="InterPro" id="IPR047089">
    <property type="entry name" value="Asp-tRNA-ligase_1_N"/>
</dbReference>
<dbReference type="InterPro" id="IPR002312">
    <property type="entry name" value="Asp/Asn-tRNA-synth_IIb"/>
</dbReference>
<dbReference type="InterPro" id="IPR047090">
    <property type="entry name" value="AspRS_core"/>
</dbReference>
<dbReference type="InterPro" id="IPR004115">
    <property type="entry name" value="GAD-like_sf"/>
</dbReference>
<dbReference type="InterPro" id="IPR029351">
    <property type="entry name" value="GAD_dom"/>
</dbReference>
<dbReference type="InterPro" id="IPR012340">
    <property type="entry name" value="NA-bd_OB-fold"/>
</dbReference>
<dbReference type="InterPro" id="IPR004365">
    <property type="entry name" value="NA-bd_OB_tRNA"/>
</dbReference>
<dbReference type="NCBIfam" id="TIGR00459">
    <property type="entry name" value="aspS_bact"/>
    <property type="match status" value="1"/>
</dbReference>
<dbReference type="NCBIfam" id="NF001750">
    <property type="entry name" value="PRK00476.1"/>
    <property type="match status" value="1"/>
</dbReference>
<dbReference type="PANTHER" id="PTHR22594:SF5">
    <property type="entry name" value="ASPARTATE--TRNA LIGASE, MITOCHONDRIAL"/>
    <property type="match status" value="1"/>
</dbReference>
<dbReference type="PANTHER" id="PTHR22594">
    <property type="entry name" value="ASPARTYL/LYSYL-TRNA SYNTHETASE"/>
    <property type="match status" value="1"/>
</dbReference>
<dbReference type="Pfam" id="PF02938">
    <property type="entry name" value="GAD"/>
    <property type="match status" value="1"/>
</dbReference>
<dbReference type="Pfam" id="PF00152">
    <property type="entry name" value="tRNA-synt_2"/>
    <property type="match status" value="1"/>
</dbReference>
<dbReference type="Pfam" id="PF01336">
    <property type="entry name" value="tRNA_anti-codon"/>
    <property type="match status" value="1"/>
</dbReference>
<dbReference type="PRINTS" id="PR01042">
    <property type="entry name" value="TRNASYNTHASP"/>
</dbReference>
<dbReference type="SUPFAM" id="SSF55681">
    <property type="entry name" value="Class II aaRS and biotin synthetases"/>
    <property type="match status" value="1"/>
</dbReference>
<dbReference type="SUPFAM" id="SSF55261">
    <property type="entry name" value="GAD domain-like"/>
    <property type="match status" value="1"/>
</dbReference>
<dbReference type="SUPFAM" id="SSF50249">
    <property type="entry name" value="Nucleic acid-binding proteins"/>
    <property type="match status" value="1"/>
</dbReference>
<dbReference type="PROSITE" id="PS50862">
    <property type="entry name" value="AA_TRNA_LIGASE_II"/>
    <property type="match status" value="1"/>
</dbReference>
<organism>
    <name type="scientific">Acinetobacter baumannii (strain ACICU)</name>
    <dbReference type="NCBI Taxonomy" id="405416"/>
    <lineage>
        <taxon>Bacteria</taxon>
        <taxon>Pseudomonadati</taxon>
        <taxon>Pseudomonadota</taxon>
        <taxon>Gammaproteobacteria</taxon>
        <taxon>Moraxellales</taxon>
        <taxon>Moraxellaceae</taxon>
        <taxon>Acinetobacter</taxon>
        <taxon>Acinetobacter calcoaceticus/baumannii complex</taxon>
    </lineage>
</organism>
<proteinExistence type="inferred from homology"/>
<name>SYDND_ACIBC</name>
<accession>B2HYL7</accession>
<feature type="chain" id="PRO_1000090947" description="Aspartate--tRNA(Asp/Asn) ligase">
    <location>
        <begin position="1"/>
        <end position="592"/>
    </location>
</feature>
<feature type="region of interest" description="Aspartate" evidence="1">
    <location>
        <begin position="199"/>
        <end position="202"/>
    </location>
</feature>
<feature type="binding site" evidence="1">
    <location>
        <position position="175"/>
    </location>
    <ligand>
        <name>L-aspartate</name>
        <dbReference type="ChEBI" id="CHEBI:29991"/>
    </ligand>
</feature>
<feature type="binding site" evidence="1">
    <location>
        <begin position="221"/>
        <end position="223"/>
    </location>
    <ligand>
        <name>ATP</name>
        <dbReference type="ChEBI" id="CHEBI:30616"/>
    </ligand>
</feature>
<feature type="binding site" evidence="1">
    <location>
        <position position="221"/>
    </location>
    <ligand>
        <name>L-aspartate</name>
        <dbReference type="ChEBI" id="CHEBI:29991"/>
    </ligand>
</feature>
<feature type="binding site" evidence="1">
    <location>
        <position position="230"/>
    </location>
    <ligand>
        <name>ATP</name>
        <dbReference type="ChEBI" id="CHEBI:30616"/>
    </ligand>
</feature>
<feature type="binding site" evidence="1">
    <location>
        <position position="450"/>
    </location>
    <ligand>
        <name>L-aspartate</name>
        <dbReference type="ChEBI" id="CHEBI:29991"/>
    </ligand>
</feature>
<feature type="binding site" evidence="1">
    <location>
        <position position="483"/>
    </location>
    <ligand>
        <name>ATP</name>
        <dbReference type="ChEBI" id="CHEBI:30616"/>
    </ligand>
</feature>
<feature type="binding site" evidence="1">
    <location>
        <position position="490"/>
    </location>
    <ligand>
        <name>L-aspartate</name>
        <dbReference type="ChEBI" id="CHEBI:29991"/>
    </ligand>
</feature>
<feature type="binding site" evidence="1">
    <location>
        <begin position="535"/>
        <end position="538"/>
    </location>
    <ligand>
        <name>ATP</name>
        <dbReference type="ChEBI" id="CHEBI:30616"/>
    </ligand>
</feature>
<feature type="site" description="Important for tRNA non-discrimination" evidence="1">
    <location>
        <position position="31"/>
    </location>
</feature>
<feature type="site" description="Important for tRNA non-discrimination" evidence="1">
    <location>
        <position position="82"/>
    </location>
</feature>
<evidence type="ECO:0000255" key="1">
    <source>
        <dbReference type="HAMAP-Rule" id="MF_00044"/>
    </source>
</evidence>
<keyword id="KW-0030">Aminoacyl-tRNA synthetase</keyword>
<keyword id="KW-0067">ATP-binding</keyword>
<keyword id="KW-0963">Cytoplasm</keyword>
<keyword id="KW-0436">Ligase</keyword>
<keyword id="KW-0547">Nucleotide-binding</keyword>
<keyword id="KW-0648">Protein biosynthesis</keyword>